<comment type="function">
    <text evidence="1">Binds together with bS18 to 16S ribosomal RNA.</text>
</comment>
<comment type="similarity">
    <text evidence="1">Belongs to the bacterial ribosomal protein bS6 family.</text>
</comment>
<reference key="1">
    <citation type="submission" date="2005-08" db="EMBL/GenBank/DDBJ databases">
        <title>Complete sequence of chromosome 1 of Nitrosospira multiformis ATCC 25196.</title>
        <authorList>
            <person name="Copeland A."/>
            <person name="Lucas S."/>
            <person name="Lapidus A."/>
            <person name="Barry K."/>
            <person name="Detter J.C."/>
            <person name="Glavina T."/>
            <person name="Hammon N."/>
            <person name="Israni S."/>
            <person name="Pitluck S."/>
            <person name="Chain P."/>
            <person name="Malfatti S."/>
            <person name="Shin M."/>
            <person name="Vergez L."/>
            <person name="Schmutz J."/>
            <person name="Larimer F."/>
            <person name="Land M."/>
            <person name="Hauser L."/>
            <person name="Kyrpides N."/>
            <person name="Lykidis A."/>
            <person name="Richardson P."/>
        </authorList>
    </citation>
    <scope>NUCLEOTIDE SEQUENCE [LARGE SCALE GENOMIC DNA]</scope>
    <source>
        <strain>ATCC 25196 / NCIMB 11849 / C 71</strain>
    </source>
</reference>
<keyword id="KW-1185">Reference proteome</keyword>
<keyword id="KW-0687">Ribonucleoprotein</keyword>
<keyword id="KW-0689">Ribosomal protein</keyword>
<keyword id="KW-0694">RNA-binding</keyword>
<keyword id="KW-0699">rRNA-binding</keyword>
<sequence length="125" mass="14626">MRHYEIVFIVHPDQSEQVSAMIERYRNIVTARNGQVHRLEDWGRRQLAYLIQKVHKAHYVLMNIECDQETLDELEHAFKFNDAILRHLTLKMDEPVTAPSPMMREEKAKSAPQPAEEAKETTLAT</sequence>
<name>RS6_NITMU</name>
<dbReference type="EMBL" id="CP000103">
    <property type="protein sequence ID" value="ABB75246.1"/>
    <property type="molecule type" value="Genomic_DNA"/>
</dbReference>
<dbReference type="RefSeq" id="WP_011381266.1">
    <property type="nucleotide sequence ID" value="NC_007614.1"/>
</dbReference>
<dbReference type="SMR" id="Q2Y7M5"/>
<dbReference type="STRING" id="323848.Nmul_A1951"/>
<dbReference type="KEGG" id="nmu:Nmul_A1951"/>
<dbReference type="eggNOG" id="COG0360">
    <property type="taxonomic scope" value="Bacteria"/>
</dbReference>
<dbReference type="HOGENOM" id="CLU_113441_6_1_4"/>
<dbReference type="OrthoDB" id="9812702at2"/>
<dbReference type="Proteomes" id="UP000002718">
    <property type="component" value="Chromosome"/>
</dbReference>
<dbReference type="GO" id="GO:0022627">
    <property type="term" value="C:cytosolic small ribosomal subunit"/>
    <property type="evidence" value="ECO:0007669"/>
    <property type="project" value="TreeGrafter"/>
</dbReference>
<dbReference type="GO" id="GO:0070181">
    <property type="term" value="F:small ribosomal subunit rRNA binding"/>
    <property type="evidence" value="ECO:0007669"/>
    <property type="project" value="TreeGrafter"/>
</dbReference>
<dbReference type="GO" id="GO:0003735">
    <property type="term" value="F:structural constituent of ribosome"/>
    <property type="evidence" value="ECO:0007669"/>
    <property type="project" value="InterPro"/>
</dbReference>
<dbReference type="GO" id="GO:0006412">
    <property type="term" value="P:translation"/>
    <property type="evidence" value="ECO:0007669"/>
    <property type="project" value="UniProtKB-UniRule"/>
</dbReference>
<dbReference type="CDD" id="cd00473">
    <property type="entry name" value="bS6"/>
    <property type="match status" value="1"/>
</dbReference>
<dbReference type="Gene3D" id="3.30.70.60">
    <property type="match status" value="1"/>
</dbReference>
<dbReference type="HAMAP" id="MF_00360">
    <property type="entry name" value="Ribosomal_bS6"/>
    <property type="match status" value="1"/>
</dbReference>
<dbReference type="InterPro" id="IPR000529">
    <property type="entry name" value="Ribosomal_bS6"/>
</dbReference>
<dbReference type="InterPro" id="IPR035980">
    <property type="entry name" value="Ribosomal_bS6_sf"/>
</dbReference>
<dbReference type="InterPro" id="IPR020814">
    <property type="entry name" value="Ribosomal_S6_plastid/chlpt"/>
</dbReference>
<dbReference type="InterPro" id="IPR014717">
    <property type="entry name" value="Transl_elong_EF1B/ribsomal_bS6"/>
</dbReference>
<dbReference type="NCBIfam" id="TIGR00166">
    <property type="entry name" value="S6"/>
    <property type="match status" value="1"/>
</dbReference>
<dbReference type="PANTHER" id="PTHR21011">
    <property type="entry name" value="MITOCHONDRIAL 28S RIBOSOMAL PROTEIN S6"/>
    <property type="match status" value="1"/>
</dbReference>
<dbReference type="PANTHER" id="PTHR21011:SF1">
    <property type="entry name" value="SMALL RIBOSOMAL SUBUNIT PROTEIN BS6M"/>
    <property type="match status" value="1"/>
</dbReference>
<dbReference type="Pfam" id="PF01250">
    <property type="entry name" value="Ribosomal_S6"/>
    <property type="match status" value="1"/>
</dbReference>
<dbReference type="SUPFAM" id="SSF54995">
    <property type="entry name" value="Ribosomal protein S6"/>
    <property type="match status" value="1"/>
</dbReference>
<organism>
    <name type="scientific">Nitrosospira multiformis (strain ATCC 25196 / NCIMB 11849 / C 71)</name>
    <dbReference type="NCBI Taxonomy" id="323848"/>
    <lineage>
        <taxon>Bacteria</taxon>
        <taxon>Pseudomonadati</taxon>
        <taxon>Pseudomonadota</taxon>
        <taxon>Betaproteobacteria</taxon>
        <taxon>Nitrosomonadales</taxon>
        <taxon>Nitrosomonadaceae</taxon>
        <taxon>Nitrosospira</taxon>
    </lineage>
</organism>
<gene>
    <name evidence="1" type="primary">rpsF</name>
    <name type="ordered locus">Nmul_A1951</name>
</gene>
<evidence type="ECO:0000255" key="1">
    <source>
        <dbReference type="HAMAP-Rule" id="MF_00360"/>
    </source>
</evidence>
<evidence type="ECO:0000256" key="2">
    <source>
        <dbReference type="SAM" id="MobiDB-lite"/>
    </source>
</evidence>
<evidence type="ECO:0000305" key="3"/>
<proteinExistence type="inferred from homology"/>
<accession>Q2Y7M5</accession>
<feature type="chain" id="PRO_0000229558" description="Small ribosomal subunit protein bS6">
    <location>
        <begin position="1"/>
        <end position="125"/>
    </location>
</feature>
<feature type="region of interest" description="Disordered" evidence="2">
    <location>
        <begin position="96"/>
        <end position="125"/>
    </location>
</feature>
<feature type="compositionally biased region" description="Basic and acidic residues" evidence="2">
    <location>
        <begin position="116"/>
        <end position="125"/>
    </location>
</feature>
<protein>
    <recommendedName>
        <fullName evidence="1">Small ribosomal subunit protein bS6</fullName>
    </recommendedName>
    <alternativeName>
        <fullName evidence="3">30S ribosomal protein S6</fullName>
    </alternativeName>
</protein>